<comment type="function">
    <text evidence="1">Involved in the biosynthesis of sulfomenaquinone (SMK, initially named S881 on the basis of its mass), which is localized in the outer envelope of M.tuberculosis and negatively regulates its virulence. Catalyzes the hydroxylation of beta-dihydromenaquinone-9, leading to the formation of omega-hydroxy-beta-dihydromenaquinone-9.</text>
</comment>
<comment type="catalytic activity">
    <reaction evidence="1">
        <text>beta-dihydromenaquinone-9 + 2 reduced [2Fe-2S]-[ferredoxin] + O2 + 2 H(+) = omega-hydroxy-beta-dihydromenaquinone-9 + 2 oxidized [2Fe-2S]-[ferredoxin] + H2O</text>
        <dbReference type="Rhea" id="RHEA:56680"/>
        <dbReference type="Rhea" id="RHEA-COMP:10000"/>
        <dbReference type="Rhea" id="RHEA-COMP:10001"/>
        <dbReference type="ChEBI" id="CHEBI:15377"/>
        <dbReference type="ChEBI" id="CHEBI:15378"/>
        <dbReference type="ChEBI" id="CHEBI:15379"/>
        <dbReference type="ChEBI" id="CHEBI:33737"/>
        <dbReference type="ChEBI" id="CHEBI:33738"/>
        <dbReference type="ChEBI" id="CHEBI:134607"/>
        <dbReference type="ChEBI" id="CHEBI:140189"/>
        <dbReference type="EC" id="1.14.15.27"/>
    </reaction>
    <physiologicalReaction direction="left-to-right" evidence="1">
        <dbReference type="Rhea" id="RHEA:56681"/>
    </physiologicalReaction>
</comment>
<comment type="cofactor">
    <cofactor evidence="2">
        <name>heme</name>
        <dbReference type="ChEBI" id="CHEBI:30413"/>
    </cofactor>
</comment>
<comment type="subcellular location">
    <subcellularLocation>
        <location evidence="1">Cytoplasm</location>
    </subcellularLocation>
</comment>
<comment type="similarity">
    <text evidence="3">Belongs to the cytochrome P450 family.</text>
</comment>
<gene>
    <name type="primary">cyp128</name>
    <name type="ordered locus">MT2330</name>
</gene>
<dbReference type="EC" id="1.14.15.27" evidence="1"/>
<dbReference type="EMBL" id="AE000516">
    <property type="protein sequence ID" value="AAK46612.1"/>
    <property type="molecule type" value="Genomic_DNA"/>
</dbReference>
<dbReference type="PIR" id="H70729">
    <property type="entry name" value="H70729"/>
</dbReference>
<dbReference type="RefSeq" id="WP_003411663.1">
    <property type="nucleotide sequence ID" value="NZ_KK341227.1"/>
</dbReference>
<dbReference type="SMR" id="P9WPN6"/>
<dbReference type="KEGG" id="mtc:MT2330"/>
<dbReference type="PATRIC" id="fig|83331.31.peg.2505"/>
<dbReference type="HOGENOM" id="CLU_033716_0_2_11"/>
<dbReference type="Proteomes" id="UP000001020">
    <property type="component" value="Chromosome"/>
</dbReference>
<dbReference type="GO" id="GO:0005737">
    <property type="term" value="C:cytoplasm"/>
    <property type="evidence" value="ECO:0007669"/>
    <property type="project" value="UniProtKB-SubCell"/>
</dbReference>
<dbReference type="GO" id="GO:0036199">
    <property type="term" value="F:cholest-4-en-3-one 26-monooxygenase activity"/>
    <property type="evidence" value="ECO:0007669"/>
    <property type="project" value="TreeGrafter"/>
</dbReference>
<dbReference type="GO" id="GO:0020037">
    <property type="term" value="F:heme binding"/>
    <property type="evidence" value="ECO:0007669"/>
    <property type="project" value="InterPro"/>
</dbReference>
<dbReference type="GO" id="GO:0005506">
    <property type="term" value="F:iron ion binding"/>
    <property type="evidence" value="ECO:0007669"/>
    <property type="project" value="InterPro"/>
</dbReference>
<dbReference type="GO" id="GO:0008395">
    <property type="term" value="F:steroid hydroxylase activity"/>
    <property type="evidence" value="ECO:0007669"/>
    <property type="project" value="TreeGrafter"/>
</dbReference>
<dbReference type="GO" id="GO:0006707">
    <property type="term" value="P:cholesterol catabolic process"/>
    <property type="evidence" value="ECO:0007669"/>
    <property type="project" value="TreeGrafter"/>
</dbReference>
<dbReference type="Gene3D" id="1.10.630.10">
    <property type="entry name" value="Cytochrome P450"/>
    <property type="match status" value="1"/>
</dbReference>
<dbReference type="InterPro" id="IPR001128">
    <property type="entry name" value="Cyt_P450"/>
</dbReference>
<dbReference type="InterPro" id="IPR002397">
    <property type="entry name" value="Cyt_P450_B"/>
</dbReference>
<dbReference type="InterPro" id="IPR017972">
    <property type="entry name" value="Cyt_P450_CS"/>
</dbReference>
<dbReference type="InterPro" id="IPR036396">
    <property type="entry name" value="Cyt_P450_sf"/>
</dbReference>
<dbReference type="PANTHER" id="PTHR46696:SF4">
    <property type="entry name" value="BIOTIN BIOSYNTHESIS CYTOCHROME P450"/>
    <property type="match status" value="1"/>
</dbReference>
<dbReference type="PANTHER" id="PTHR46696">
    <property type="entry name" value="P450, PUTATIVE (EUROFUNG)-RELATED"/>
    <property type="match status" value="1"/>
</dbReference>
<dbReference type="Pfam" id="PF00067">
    <property type="entry name" value="p450"/>
    <property type="match status" value="1"/>
</dbReference>
<dbReference type="PRINTS" id="PR00359">
    <property type="entry name" value="BP450"/>
</dbReference>
<dbReference type="SUPFAM" id="SSF48264">
    <property type="entry name" value="Cytochrome P450"/>
    <property type="match status" value="1"/>
</dbReference>
<dbReference type="PROSITE" id="PS00086">
    <property type="entry name" value="CYTOCHROME_P450"/>
    <property type="match status" value="1"/>
</dbReference>
<reference key="1">
    <citation type="journal article" date="2002" name="J. Bacteriol.">
        <title>Whole-genome comparison of Mycobacterium tuberculosis clinical and laboratory strains.</title>
        <authorList>
            <person name="Fleischmann R.D."/>
            <person name="Alland D."/>
            <person name="Eisen J.A."/>
            <person name="Carpenter L."/>
            <person name="White O."/>
            <person name="Peterson J.D."/>
            <person name="DeBoy R.T."/>
            <person name="Dodson R.J."/>
            <person name="Gwinn M.L."/>
            <person name="Haft D.H."/>
            <person name="Hickey E.K."/>
            <person name="Kolonay J.F."/>
            <person name="Nelson W.C."/>
            <person name="Umayam L.A."/>
            <person name="Ermolaeva M.D."/>
            <person name="Salzberg S.L."/>
            <person name="Delcher A."/>
            <person name="Utterback T.R."/>
            <person name="Weidman J.F."/>
            <person name="Khouri H.M."/>
            <person name="Gill J."/>
            <person name="Mikula A."/>
            <person name="Bishai W."/>
            <person name="Jacobs W.R. Jr."/>
            <person name="Venter J.C."/>
            <person name="Fraser C.M."/>
        </authorList>
    </citation>
    <scope>NUCLEOTIDE SEQUENCE [LARGE SCALE GENOMIC DNA]</scope>
    <source>
        <strain>CDC 1551 / Oshkosh</strain>
    </source>
</reference>
<accession>P9WPN6</accession>
<accession>D0EW74</accession>
<accession>F2GJB1</accession>
<accession>P63713</accession>
<accession>Q59572</accession>
<keyword id="KW-0963">Cytoplasm</keyword>
<keyword id="KW-0349">Heme</keyword>
<keyword id="KW-0408">Iron</keyword>
<keyword id="KW-0479">Metal-binding</keyword>
<keyword id="KW-0503">Monooxygenase</keyword>
<keyword id="KW-0560">Oxidoreductase</keyword>
<keyword id="KW-1185">Reference proteome</keyword>
<evidence type="ECO:0000250" key="1">
    <source>
        <dbReference type="UniProtKB" id="P9WPN7"/>
    </source>
</evidence>
<evidence type="ECO:0000250" key="2">
    <source>
        <dbReference type="UniProtKB" id="Q00441"/>
    </source>
</evidence>
<evidence type="ECO:0000305" key="3"/>
<protein>
    <recommendedName>
        <fullName evidence="1">Beta-dihydromenaquinone-9 omega-hydroxylase</fullName>
        <ecNumber evidence="1">1.14.15.27</ecNumber>
    </recommendedName>
    <alternativeName>
        <fullName evidence="1">Cytochrome P450 128</fullName>
    </alternativeName>
</protein>
<feature type="chain" id="PRO_0000426920" description="Beta-dihydromenaquinone-9 omega-hydroxylase">
    <location>
        <begin position="1"/>
        <end position="489"/>
    </location>
</feature>
<feature type="binding site" description="axial binding residue" evidence="2">
    <location>
        <position position="435"/>
    </location>
    <ligand>
        <name>heme</name>
        <dbReference type="ChEBI" id="CHEBI:30413"/>
    </ligand>
    <ligandPart>
        <name>Fe</name>
        <dbReference type="ChEBI" id="CHEBI:18248"/>
    </ligandPart>
</feature>
<proteinExistence type="inferred from homology"/>
<sequence length="489" mass="53313">MTATQSPPEPAPDRVRLAGCPLAGTPDVGLTAQDATTALGVPTRRRASSGGIPVATSMWRDAQTVRTYGPAVAKALALRVAGKARSRLTGRHCRKFMQLTDFDPFDPAIAADPYPHYRELLAGERVQYNPKRDVYILSRYADVREAARNHDTLSSARGVTFSRGWLPFLPTSDPPAHTRMRKQLAPGMARGALETWRPMVDQLARELVGGLLTQTPADVVSTVAAPMPMRAITSVLGVDGPDEAAFCRLSNQAVRITDVALSASGLISLVQGFAGFRRLRALFTHRRDNGLLRECTVLGKLATHAEQGRLSDDELFFFAVLLLVAGYESTAHMISTLFLTLADYPDQLTLLAQQPDLIPSAIEEHLRFISPIQNICRTTRVDYSVGQAVIPAGSLVLLAWGAANRDPRQYEDPDVFRADRNPVGHLAFGSGIHLCPGTQLARMEGQAILREIVANIDRIEVVEPPTWTTNANLRGLTRLRVAVTPRVAP</sequence>
<organism>
    <name type="scientific">Mycobacterium tuberculosis (strain CDC 1551 / Oshkosh)</name>
    <dbReference type="NCBI Taxonomy" id="83331"/>
    <lineage>
        <taxon>Bacteria</taxon>
        <taxon>Bacillati</taxon>
        <taxon>Actinomycetota</taxon>
        <taxon>Actinomycetes</taxon>
        <taxon>Mycobacteriales</taxon>
        <taxon>Mycobacteriaceae</taxon>
        <taxon>Mycobacterium</taxon>
        <taxon>Mycobacterium tuberculosis complex</taxon>
    </lineage>
</organism>
<name>CP128_MYCTO</name>